<organism>
    <name type="scientific">Paraburkholderia phymatum (strain DSM 17167 / CIP 108236 / LMG 21445 / STM815)</name>
    <name type="common">Burkholderia phymatum</name>
    <dbReference type="NCBI Taxonomy" id="391038"/>
    <lineage>
        <taxon>Bacteria</taxon>
        <taxon>Pseudomonadati</taxon>
        <taxon>Pseudomonadota</taxon>
        <taxon>Betaproteobacteria</taxon>
        <taxon>Burkholderiales</taxon>
        <taxon>Burkholderiaceae</taxon>
        <taxon>Paraburkholderia</taxon>
    </lineage>
</organism>
<name>SAHH_PARP8</name>
<evidence type="ECO:0000255" key="1">
    <source>
        <dbReference type="HAMAP-Rule" id="MF_00563"/>
    </source>
</evidence>
<feature type="chain" id="PRO_1000129273" description="Adenosylhomocysteinase">
    <location>
        <begin position="1"/>
        <end position="473"/>
    </location>
</feature>
<feature type="binding site" evidence="1">
    <location>
        <position position="64"/>
    </location>
    <ligand>
        <name>substrate</name>
    </ligand>
</feature>
<feature type="binding site" evidence="1">
    <location>
        <position position="139"/>
    </location>
    <ligand>
        <name>substrate</name>
    </ligand>
</feature>
<feature type="binding site" evidence="1">
    <location>
        <position position="199"/>
    </location>
    <ligand>
        <name>substrate</name>
    </ligand>
</feature>
<feature type="binding site" evidence="1">
    <location>
        <begin position="200"/>
        <end position="202"/>
    </location>
    <ligand>
        <name>NAD(+)</name>
        <dbReference type="ChEBI" id="CHEBI:57540"/>
    </ligand>
</feature>
<feature type="binding site" evidence="1">
    <location>
        <position position="229"/>
    </location>
    <ligand>
        <name>substrate</name>
    </ligand>
</feature>
<feature type="binding site" evidence="1">
    <location>
        <position position="233"/>
    </location>
    <ligand>
        <name>substrate</name>
    </ligand>
</feature>
<feature type="binding site" evidence="1">
    <location>
        <position position="234"/>
    </location>
    <ligand>
        <name>NAD(+)</name>
        <dbReference type="ChEBI" id="CHEBI:57540"/>
    </ligand>
</feature>
<feature type="binding site" evidence="1">
    <location>
        <begin position="263"/>
        <end position="268"/>
    </location>
    <ligand>
        <name>NAD(+)</name>
        <dbReference type="ChEBI" id="CHEBI:57540"/>
    </ligand>
</feature>
<feature type="binding site" evidence="1">
    <location>
        <position position="286"/>
    </location>
    <ligand>
        <name>NAD(+)</name>
        <dbReference type="ChEBI" id="CHEBI:57540"/>
    </ligand>
</feature>
<feature type="binding site" evidence="1">
    <location>
        <position position="321"/>
    </location>
    <ligand>
        <name>NAD(+)</name>
        <dbReference type="ChEBI" id="CHEBI:57540"/>
    </ligand>
</feature>
<feature type="binding site" evidence="1">
    <location>
        <begin position="342"/>
        <end position="344"/>
    </location>
    <ligand>
        <name>NAD(+)</name>
        <dbReference type="ChEBI" id="CHEBI:57540"/>
    </ligand>
</feature>
<feature type="binding site" evidence="1">
    <location>
        <position position="387"/>
    </location>
    <ligand>
        <name>NAD(+)</name>
        <dbReference type="ChEBI" id="CHEBI:57540"/>
    </ligand>
</feature>
<keyword id="KW-0963">Cytoplasm</keyword>
<keyword id="KW-0378">Hydrolase</keyword>
<keyword id="KW-0520">NAD</keyword>
<keyword id="KW-0554">One-carbon metabolism</keyword>
<keyword id="KW-1185">Reference proteome</keyword>
<dbReference type="EC" id="3.13.2.1" evidence="1"/>
<dbReference type="EMBL" id="CP001043">
    <property type="protein sequence ID" value="ACC72090.1"/>
    <property type="molecule type" value="Genomic_DNA"/>
</dbReference>
<dbReference type="RefSeq" id="WP_012402269.1">
    <property type="nucleotide sequence ID" value="NC_010622.1"/>
</dbReference>
<dbReference type="SMR" id="B2JIP4"/>
<dbReference type="STRING" id="391038.Bphy_2918"/>
<dbReference type="KEGG" id="bph:Bphy_2918"/>
<dbReference type="eggNOG" id="COG0499">
    <property type="taxonomic scope" value="Bacteria"/>
</dbReference>
<dbReference type="HOGENOM" id="CLU_025194_2_1_4"/>
<dbReference type="OrthoDB" id="9802717at2"/>
<dbReference type="UniPathway" id="UPA00314">
    <property type="reaction ID" value="UER00076"/>
</dbReference>
<dbReference type="Proteomes" id="UP000001192">
    <property type="component" value="Chromosome 1"/>
</dbReference>
<dbReference type="GO" id="GO:0005829">
    <property type="term" value="C:cytosol"/>
    <property type="evidence" value="ECO:0007669"/>
    <property type="project" value="TreeGrafter"/>
</dbReference>
<dbReference type="GO" id="GO:0004013">
    <property type="term" value="F:adenosylhomocysteinase activity"/>
    <property type="evidence" value="ECO:0007669"/>
    <property type="project" value="UniProtKB-UniRule"/>
</dbReference>
<dbReference type="GO" id="GO:0071269">
    <property type="term" value="P:L-homocysteine biosynthetic process"/>
    <property type="evidence" value="ECO:0007669"/>
    <property type="project" value="UniProtKB-UniRule"/>
</dbReference>
<dbReference type="GO" id="GO:0006730">
    <property type="term" value="P:one-carbon metabolic process"/>
    <property type="evidence" value="ECO:0007669"/>
    <property type="project" value="UniProtKB-KW"/>
</dbReference>
<dbReference type="GO" id="GO:0033353">
    <property type="term" value="P:S-adenosylmethionine cycle"/>
    <property type="evidence" value="ECO:0007669"/>
    <property type="project" value="TreeGrafter"/>
</dbReference>
<dbReference type="CDD" id="cd00401">
    <property type="entry name" value="SAHH"/>
    <property type="match status" value="1"/>
</dbReference>
<dbReference type="FunFam" id="3.40.50.720:FF:000004">
    <property type="entry name" value="Adenosylhomocysteinase"/>
    <property type="match status" value="1"/>
</dbReference>
<dbReference type="Gene3D" id="3.40.50.1480">
    <property type="entry name" value="Adenosylhomocysteinase-like"/>
    <property type="match status" value="1"/>
</dbReference>
<dbReference type="Gene3D" id="3.40.50.720">
    <property type="entry name" value="NAD(P)-binding Rossmann-like Domain"/>
    <property type="match status" value="1"/>
</dbReference>
<dbReference type="HAMAP" id="MF_00563">
    <property type="entry name" value="AdoHcyase"/>
    <property type="match status" value="1"/>
</dbReference>
<dbReference type="InterPro" id="IPR042172">
    <property type="entry name" value="Adenosylhomocyst_ase-like_sf"/>
</dbReference>
<dbReference type="InterPro" id="IPR000043">
    <property type="entry name" value="Adenosylhomocysteinase-like"/>
</dbReference>
<dbReference type="InterPro" id="IPR015878">
    <property type="entry name" value="Ado_hCys_hydrolase_NAD-bd"/>
</dbReference>
<dbReference type="InterPro" id="IPR036291">
    <property type="entry name" value="NAD(P)-bd_dom_sf"/>
</dbReference>
<dbReference type="InterPro" id="IPR020082">
    <property type="entry name" value="S-Ado-L-homoCys_hydrolase_CS"/>
</dbReference>
<dbReference type="NCBIfam" id="TIGR00936">
    <property type="entry name" value="ahcY"/>
    <property type="match status" value="1"/>
</dbReference>
<dbReference type="NCBIfam" id="NF004005">
    <property type="entry name" value="PRK05476.2-3"/>
    <property type="match status" value="1"/>
</dbReference>
<dbReference type="PANTHER" id="PTHR23420">
    <property type="entry name" value="ADENOSYLHOMOCYSTEINASE"/>
    <property type="match status" value="1"/>
</dbReference>
<dbReference type="PANTHER" id="PTHR23420:SF0">
    <property type="entry name" value="ADENOSYLHOMOCYSTEINASE"/>
    <property type="match status" value="1"/>
</dbReference>
<dbReference type="Pfam" id="PF05221">
    <property type="entry name" value="AdoHcyase"/>
    <property type="match status" value="1"/>
</dbReference>
<dbReference type="Pfam" id="PF00670">
    <property type="entry name" value="AdoHcyase_NAD"/>
    <property type="match status" value="1"/>
</dbReference>
<dbReference type="PIRSF" id="PIRSF001109">
    <property type="entry name" value="Ad_hcy_hydrolase"/>
    <property type="match status" value="1"/>
</dbReference>
<dbReference type="SMART" id="SM00996">
    <property type="entry name" value="AdoHcyase"/>
    <property type="match status" value="1"/>
</dbReference>
<dbReference type="SMART" id="SM00997">
    <property type="entry name" value="AdoHcyase_NAD"/>
    <property type="match status" value="1"/>
</dbReference>
<dbReference type="SUPFAM" id="SSF52283">
    <property type="entry name" value="Formate/glycerate dehydrogenase catalytic domain-like"/>
    <property type="match status" value="1"/>
</dbReference>
<dbReference type="SUPFAM" id="SSF51735">
    <property type="entry name" value="NAD(P)-binding Rossmann-fold domains"/>
    <property type="match status" value="1"/>
</dbReference>
<dbReference type="PROSITE" id="PS00738">
    <property type="entry name" value="ADOHCYASE_1"/>
    <property type="match status" value="1"/>
</dbReference>
<dbReference type="PROSITE" id="PS00739">
    <property type="entry name" value="ADOHCYASE_2"/>
    <property type="match status" value="1"/>
</dbReference>
<reference key="1">
    <citation type="journal article" date="2014" name="Stand. Genomic Sci.">
        <title>Complete genome sequence of Burkholderia phymatum STM815(T), a broad host range and efficient nitrogen-fixing symbiont of Mimosa species.</title>
        <authorList>
            <person name="Moulin L."/>
            <person name="Klonowska A."/>
            <person name="Caroline B."/>
            <person name="Booth K."/>
            <person name="Vriezen J.A."/>
            <person name="Melkonian R."/>
            <person name="James E.K."/>
            <person name="Young J.P."/>
            <person name="Bena G."/>
            <person name="Hauser L."/>
            <person name="Land M."/>
            <person name="Kyrpides N."/>
            <person name="Bruce D."/>
            <person name="Chain P."/>
            <person name="Copeland A."/>
            <person name="Pitluck S."/>
            <person name="Woyke T."/>
            <person name="Lizotte-Waniewski M."/>
            <person name="Bristow J."/>
            <person name="Riley M."/>
        </authorList>
    </citation>
    <scope>NUCLEOTIDE SEQUENCE [LARGE SCALE GENOMIC DNA]</scope>
    <source>
        <strain>DSM 17167 / CIP 108236 / LMG 21445 / STM815</strain>
    </source>
</reference>
<protein>
    <recommendedName>
        <fullName evidence="1">Adenosylhomocysteinase</fullName>
        <ecNumber evidence="1">3.13.2.1</ecNumber>
    </recommendedName>
    <alternativeName>
        <fullName evidence="1">S-adenosyl-L-homocysteine hydrolase</fullName>
        <shortName evidence="1">AdoHcyase</shortName>
    </alternativeName>
</protein>
<accession>B2JIP4</accession>
<comment type="function">
    <text evidence="1">May play a key role in the regulation of the intracellular concentration of adenosylhomocysteine.</text>
</comment>
<comment type="catalytic activity">
    <reaction evidence="1">
        <text>S-adenosyl-L-homocysteine + H2O = L-homocysteine + adenosine</text>
        <dbReference type="Rhea" id="RHEA:21708"/>
        <dbReference type="ChEBI" id="CHEBI:15377"/>
        <dbReference type="ChEBI" id="CHEBI:16335"/>
        <dbReference type="ChEBI" id="CHEBI:57856"/>
        <dbReference type="ChEBI" id="CHEBI:58199"/>
        <dbReference type="EC" id="3.13.2.1"/>
    </reaction>
</comment>
<comment type="cofactor">
    <cofactor evidence="1">
        <name>NAD(+)</name>
        <dbReference type="ChEBI" id="CHEBI:57540"/>
    </cofactor>
    <text evidence="1">Binds 1 NAD(+) per subunit.</text>
</comment>
<comment type="pathway">
    <text evidence="1">Amino-acid biosynthesis; L-homocysteine biosynthesis; L-homocysteine from S-adenosyl-L-homocysteine: step 1/1.</text>
</comment>
<comment type="subcellular location">
    <subcellularLocation>
        <location evidence="1">Cytoplasm</location>
    </subcellularLocation>
</comment>
<comment type="similarity">
    <text evidence="1">Belongs to the adenosylhomocysteinase family.</text>
</comment>
<sequence>MNAAVIDSKHSQDFIVADLSLADWGRKELDIAETEMPGLVQIREEYKAQQPLKGARVAGSLHMTIQTGVLIETLKALGADVRWASCNIFSTQDHAAAAIAKGGTPVFAFKGESLDEYWEFSHRIFEWPNGEFANMILDDGGDATLLLILGSKAEKDRSVISKPTNEEEVALYKSIARHLDADPVWYSTRLAHIKGVTEETTTGVHRLYQMEKEGRLPFPAINVNDSVTKSKFDNLYGCRESLVDGIKRATDVMIAGKIAVVAGYGDVGKGCAQSLRGLGATVWVTEIDPICALQAAMEGYRVVTMEYAADKADIFVTATGNYHVIGHDHMKAMRHNAIVCNIGHFDSEIDVASTRQYTWENIKPQVDHIIFPDGKRVILLAEGRLVNLGCATGHPSFVMSNSFTNQTLAQIELFVEGSKYENKVYVLPKQLDEKVARLHLARIGANLTELTSEQAGYIGVDKNGPFKPNHYRY</sequence>
<gene>
    <name evidence="1" type="primary">ahcY</name>
    <name type="ordered locus">Bphy_2918</name>
</gene>
<proteinExistence type="inferred from homology"/>